<protein>
    <recommendedName>
        <fullName>Gelsolin</fullName>
    </recommendedName>
</protein>
<accession>Q07171</accession>
<accession>A4V2C8</accession>
<accession>A9UNC4</accession>
<accession>Q0KIE3</accession>
<accession>Q0KIE4</accession>
<accession>Q8MRF9</accession>
<accession>Q9VMZ1</accession>
<accession>Q9VMZ2</accession>
<dbReference type="EMBL" id="L08794">
    <property type="protein sequence ID" value="AAA28568.1"/>
    <property type="status" value="ALT_INIT"/>
    <property type="molecule type" value="mRNA"/>
</dbReference>
<dbReference type="EMBL" id="X75629">
    <property type="protein sequence ID" value="CAA53294.1"/>
    <property type="molecule type" value="mRNA"/>
</dbReference>
<dbReference type="EMBL" id="X75630">
    <property type="protein sequence ID" value="CAA53295.1"/>
    <property type="status" value="ALT_INIT"/>
    <property type="molecule type" value="mRNA"/>
</dbReference>
<dbReference type="EMBL" id="AE014297">
    <property type="protein sequence ID" value="AAF52162.2"/>
    <property type="molecule type" value="Genomic_DNA"/>
</dbReference>
<dbReference type="EMBL" id="AE014297">
    <property type="protein sequence ID" value="AAF52163.1"/>
    <property type="molecule type" value="Genomic_DNA"/>
</dbReference>
<dbReference type="EMBL" id="AE014297">
    <property type="protein sequence ID" value="AAF52164.3"/>
    <property type="molecule type" value="Genomic_DNA"/>
</dbReference>
<dbReference type="EMBL" id="AE014297">
    <property type="protein sequence ID" value="AAN13333.3"/>
    <property type="molecule type" value="Genomic_DNA"/>
</dbReference>
<dbReference type="EMBL" id="AE014297">
    <property type="protein sequence ID" value="AAO41510.1"/>
    <property type="molecule type" value="Genomic_DNA"/>
</dbReference>
<dbReference type="EMBL" id="AY119662">
    <property type="protein sequence ID" value="AAM50316.1"/>
    <property type="status" value="ALT_SEQ"/>
    <property type="molecule type" value="mRNA"/>
</dbReference>
<dbReference type="EMBL" id="BT031288">
    <property type="protein sequence ID" value="ABY20529.1"/>
    <property type="status" value="ALT_INIT"/>
    <property type="molecule type" value="mRNA"/>
</dbReference>
<dbReference type="PIR" id="A53909">
    <property type="entry name" value="A53909"/>
</dbReference>
<dbReference type="RefSeq" id="NP_001036657.2">
    <molecule id="Q07171-2"/>
    <property type="nucleotide sequence ID" value="NM_001043192.3"/>
</dbReference>
<dbReference type="RefSeq" id="NP_524865.2">
    <molecule id="Q07171-1"/>
    <property type="nucleotide sequence ID" value="NM_080126.4"/>
</dbReference>
<dbReference type="RefSeq" id="NP_730788.1">
    <molecule id="Q07171-2"/>
    <property type="nucleotide sequence ID" value="NM_164319.4"/>
</dbReference>
<dbReference type="RefSeq" id="NP_730790.2">
    <molecule id="Q07171-1"/>
    <property type="nucleotide sequence ID" value="NM_164321.5"/>
</dbReference>
<dbReference type="RefSeq" id="NP_788571.1">
    <molecule id="Q07171-1"/>
    <property type="nucleotide sequence ID" value="NM_176394.3"/>
</dbReference>
<dbReference type="RefSeq" id="NP_996148.2">
    <molecule id="Q07171-6"/>
    <property type="nucleotide sequence ID" value="NM_206426.4"/>
</dbReference>
<dbReference type="RefSeq" id="NP_996149.3">
    <molecule id="Q07171-1"/>
    <property type="nucleotide sequence ID" value="NM_206427.4"/>
</dbReference>
<dbReference type="SMR" id="Q07171"/>
<dbReference type="BioGRID" id="70060">
    <property type="interactions" value="7"/>
</dbReference>
<dbReference type="FunCoup" id="Q07171">
    <property type="interactions" value="32"/>
</dbReference>
<dbReference type="IntAct" id="Q07171">
    <property type="interactions" value="13"/>
</dbReference>
<dbReference type="STRING" id="7227.FBpp0078608"/>
<dbReference type="PaxDb" id="7227-FBpp0078607"/>
<dbReference type="DNASU" id="46008"/>
<dbReference type="EnsemblMetazoa" id="FBtr0078968">
    <molecule id="Q07171-1"/>
    <property type="protein sequence ID" value="FBpp0078607"/>
    <property type="gene ID" value="FBgn0010225"/>
</dbReference>
<dbReference type="EnsemblMetazoa" id="FBtr0078969">
    <molecule id="Q07171-1"/>
    <property type="protein sequence ID" value="FBpp0078608"/>
    <property type="gene ID" value="FBgn0010225"/>
</dbReference>
<dbReference type="EnsemblMetazoa" id="FBtr0078971">
    <molecule id="Q07171-2"/>
    <property type="protein sequence ID" value="FBpp0078610"/>
    <property type="gene ID" value="FBgn0010225"/>
</dbReference>
<dbReference type="EnsemblMetazoa" id="FBtr0078973">
    <molecule id="Q07171-1"/>
    <property type="protein sequence ID" value="FBpp0078612"/>
    <property type="gene ID" value="FBgn0010225"/>
</dbReference>
<dbReference type="EnsemblMetazoa" id="FBtr0309256">
    <molecule id="Q07171-1"/>
    <property type="protein sequence ID" value="FBpp0301195"/>
    <property type="gene ID" value="FBgn0010225"/>
</dbReference>
<dbReference type="EnsemblMetazoa" id="FBtr0309257">
    <molecule id="Q07171-6"/>
    <property type="protein sequence ID" value="FBpp0301196"/>
    <property type="gene ID" value="FBgn0010225"/>
</dbReference>
<dbReference type="EnsemblMetazoa" id="FBtr0336707">
    <molecule id="Q07171-2"/>
    <property type="protein sequence ID" value="FBpp0307688"/>
    <property type="gene ID" value="FBgn0010225"/>
</dbReference>
<dbReference type="GeneID" id="46008"/>
<dbReference type="KEGG" id="dme:Dmel_CG1106"/>
<dbReference type="AGR" id="FB:FBgn0010225"/>
<dbReference type="CTD" id="46008"/>
<dbReference type="FlyBase" id="FBgn0010225">
    <property type="gene designation" value="Gel"/>
</dbReference>
<dbReference type="VEuPathDB" id="VectorBase:FBgn0010225"/>
<dbReference type="eggNOG" id="KOG0443">
    <property type="taxonomic scope" value="Eukaryota"/>
</dbReference>
<dbReference type="GeneTree" id="ENSGT00940000173475"/>
<dbReference type="InParanoid" id="Q07171"/>
<dbReference type="OMA" id="DTLFTWI"/>
<dbReference type="OrthoDB" id="6375767at2759"/>
<dbReference type="PhylomeDB" id="Q07171"/>
<dbReference type="Reactome" id="R-DME-264870">
    <property type="pathway name" value="Caspase-mediated cleavage of cytoskeletal proteins"/>
</dbReference>
<dbReference type="Reactome" id="R-DME-6798695">
    <property type="pathway name" value="Neutrophil degranulation"/>
</dbReference>
<dbReference type="SignaLink" id="Q07171"/>
<dbReference type="BioGRID-ORCS" id="46008">
    <property type="hits" value="0 hits in 3 CRISPR screens"/>
</dbReference>
<dbReference type="ChiTaRS" id="Bsg">
    <property type="organism name" value="fly"/>
</dbReference>
<dbReference type="GenomeRNAi" id="46008"/>
<dbReference type="PRO" id="PR:Q07171"/>
<dbReference type="Proteomes" id="UP000000803">
    <property type="component" value="Chromosome 3R"/>
</dbReference>
<dbReference type="Bgee" id="FBgn0010225">
    <property type="expression patterns" value="Expressed in embryonic/larval hemocyte (Drosophila) and 162 other cell types or tissues"/>
</dbReference>
<dbReference type="ExpressionAtlas" id="Q07171">
    <property type="expression patterns" value="baseline and differential"/>
</dbReference>
<dbReference type="GO" id="GO:0015629">
    <property type="term" value="C:actin cytoskeleton"/>
    <property type="evidence" value="ECO:0000318"/>
    <property type="project" value="GO_Central"/>
</dbReference>
<dbReference type="GO" id="GO:0005884">
    <property type="term" value="C:actin filament"/>
    <property type="evidence" value="ECO:0000314"/>
    <property type="project" value="FlyBase"/>
</dbReference>
<dbReference type="GO" id="GO:0005737">
    <property type="term" value="C:cytoplasm"/>
    <property type="evidence" value="ECO:0000318"/>
    <property type="project" value="GO_Central"/>
</dbReference>
<dbReference type="GO" id="GO:0005829">
    <property type="term" value="C:cytosol"/>
    <property type="evidence" value="ECO:0000314"/>
    <property type="project" value="UniProtKB"/>
</dbReference>
<dbReference type="GO" id="GO:0005576">
    <property type="term" value="C:extracellular region"/>
    <property type="evidence" value="ECO:0000314"/>
    <property type="project" value="UniProtKB"/>
</dbReference>
<dbReference type="GO" id="GO:0051015">
    <property type="term" value="F:actin filament binding"/>
    <property type="evidence" value="ECO:0000318"/>
    <property type="project" value="GO_Central"/>
</dbReference>
<dbReference type="GO" id="GO:0046872">
    <property type="term" value="F:metal ion binding"/>
    <property type="evidence" value="ECO:0007669"/>
    <property type="project" value="UniProtKB-KW"/>
</dbReference>
<dbReference type="GO" id="GO:0005546">
    <property type="term" value="F:phosphatidylinositol-4,5-bisphosphate binding"/>
    <property type="evidence" value="ECO:0000318"/>
    <property type="project" value="GO_Central"/>
</dbReference>
<dbReference type="GO" id="GO:0030041">
    <property type="term" value="P:actin filament polymerization"/>
    <property type="evidence" value="ECO:0000250"/>
    <property type="project" value="UniProtKB"/>
</dbReference>
<dbReference type="GO" id="GO:0051014">
    <property type="term" value="P:actin filament severing"/>
    <property type="evidence" value="ECO:0000318"/>
    <property type="project" value="GO_Central"/>
</dbReference>
<dbReference type="GO" id="GO:0008154">
    <property type="term" value="P:actin polymerization or depolymerization"/>
    <property type="evidence" value="ECO:0000318"/>
    <property type="project" value="GO_Central"/>
</dbReference>
<dbReference type="GO" id="GO:0051016">
    <property type="term" value="P:barbed-end actin filament capping"/>
    <property type="evidence" value="ECO:0000318"/>
    <property type="project" value="GO_Central"/>
</dbReference>
<dbReference type="CDD" id="cd11290">
    <property type="entry name" value="gelsolin_S1_like"/>
    <property type="match status" value="1"/>
</dbReference>
<dbReference type="CDD" id="cd11289">
    <property type="entry name" value="gelsolin_S2_like"/>
    <property type="match status" value="1"/>
</dbReference>
<dbReference type="CDD" id="cd11292">
    <property type="entry name" value="gelsolin_S3_like"/>
    <property type="match status" value="1"/>
</dbReference>
<dbReference type="CDD" id="cd11291">
    <property type="entry name" value="gelsolin_S6_like"/>
    <property type="match status" value="1"/>
</dbReference>
<dbReference type="FunFam" id="3.40.20.10:FF:000001">
    <property type="entry name" value="Gelsolin"/>
    <property type="match status" value="1"/>
</dbReference>
<dbReference type="FunFam" id="3.40.20.10:FF:000002">
    <property type="entry name" value="Gelsolin"/>
    <property type="match status" value="1"/>
</dbReference>
<dbReference type="FunFam" id="3.40.20.10:FF:000077">
    <property type="entry name" value="Gelsolin, isoform A"/>
    <property type="match status" value="1"/>
</dbReference>
<dbReference type="FunFam" id="3.40.20.10:FF:000103">
    <property type="entry name" value="Gelsolin, isoform J"/>
    <property type="match status" value="1"/>
</dbReference>
<dbReference type="Gene3D" id="3.40.20.10">
    <property type="entry name" value="Severin"/>
    <property type="match status" value="6"/>
</dbReference>
<dbReference type="InterPro" id="IPR029006">
    <property type="entry name" value="ADF-H/Gelsolin-like_dom_sf"/>
</dbReference>
<dbReference type="InterPro" id="IPR007123">
    <property type="entry name" value="Gelsolin-like_dom"/>
</dbReference>
<dbReference type="InterPro" id="IPR007122">
    <property type="entry name" value="Villin/Gelsolin"/>
</dbReference>
<dbReference type="PANTHER" id="PTHR11977:SF123">
    <property type="entry name" value="GELSOLIN"/>
    <property type="match status" value="1"/>
</dbReference>
<dbReference type="PANTHER" id="PTHR11977">
    <property type="entry name" value="VILLIN"/>
    <property type="match status" value="1"/>
</dbReference>
<dbReference type="Pfam" id="PF00626">
    <property type="entry name" value="Gelsolin"/>
    <property type="match status" value="5"/>
</dbReference>
<dbReference type="PRINTS" id="PR00597">
    <property type="entry name" value="GELSOLIN"/>
</dbReference>
<dbReference type="SMART" id="SM00262">
    <property type="entry name" value="GEL"/>
    <property type="match status" value="6"/>
</dbReference>
<dbReference type="SUPFAM" id="SSF55753">
    <property type="entry name" value="Actin depolymerizing proteins"/>
    <property type="match status" value="6"/>
</dbReference>
<sequence>MDASGAATMAVLSSLLVFLALSSSLCSAGTLNARPAFPVQSGEIQPSGQNSKQAARRVMHPSFANAGRTPGLEIWRIENFEPVIYPKTNYGKFYTGDSFIVLNTIENKKDKKLSWDVHFWLGLETSTDEAGAAAILTVQLDDLLNGGPVQHREVQDHESQLFLSYFKNGIRYEQGGVGTGFKHVETNAQGETRLFQVKGKRNVRVRQVNLSVSSMNTGDCFILDAGSDIYVYVGSQAKRVEKLKAISAANQIRDQDHNGRARVQIVDDFSTDADKQHFFDVLGSGSADQVPDESTADEDSAFERTDAAAVSLYKVSDASGKLKVDIIGQKPLTQAMLDTRECFILDTGSGIFVWVGKGATQKEKTDAMAKAQEFLRTKKYPAWTQIHRIVEGSESAPFKQYFDTWRDAGMSHSRLIRSALGIGSDELLNDDEIDSVVTQLKKSGGRAFGFMPDHGQNVIETITQYVAKPGSDEIVVSTVPFDEKLPLLGFASYVLTYNYEANNGDTGSLTYVWHGVKASAAARKRAFEEGLVGSKDGLLVQTNQGHEPRHFYKIFKGKLLTSFTALPVTAQLFRIRGTVESDVHASEVAADSSSLASSDAFVLHSGKSHKIYIWNGLGASAFEKQAAVDRFSDYWDDVELEQVEEGAEPDEFWEELNGEGQYDRSLGDDGAPLLESRLFHCHLSSGGFLKVEEVAQYEQEDLDSDDIMLLDAGDEIYLWVGYGVSEEENGKLLDTAKLYFNLEPTARSFDTVSIIRVPQGKEPRVFKRMFPNWDDNYWQNQPSYEDMKQLVIDANNEV</sequence>
<gene>
    <name type="primary">Gel</name>
    <name type="ORF">CG1106</name>
</gene>
<feature type="signal peptide" evidence="2">
    <location>
        <begin position="1"/>
        <end position="28"/>
    </location>
</feature>
<feature type="chain" id="PRO_0000036393" description="Gelsolin">
    <location>
        <begin position="29"/>
        <end position="798"/>
    </location>
</feature>
<feature type="repeat" description="Gelsolin-like 1">
    <location>
        <begin position="78"/>
        <end position="131"/>
    </location>
</feature>
<feature type="repeat" description="Gelsolin-like 2">
    <location>
        <begin position="203"/>
        <end position="243"/>
    </location>
</feature>
<feature type="repeat" description="Gelsolin-like 3">
    <location>
        <begin position="322"/>
        <end position="365"/>
    </location>
</feature>
<feature type="repeat" description="Gelsolin-like 4">
    <location>
        <begin position="474"/>
        <end position="524"/>
    </location>
</feature>
<feature type="repeat" description="Gelsolin-like 5">
    <location>
        <begin position="583"/>
        <end position="625"/>
    </location>
</feature>
<feature type="repeat" description="Gelsolin-like 6">
    <location>
        <begin position="689"/>
        <end position="730"/>
    </location>
</feature>
<feature type="region of interest" description="Actin-severing" evidence="2">
    <location>
        <begin position="57"/>
        <end position="181"/>
    </location>
</feature>
<feature type="region of interest" description="Actin-actin interfilament contact point" evidence="1">
    <location>
        <begin position="128"/>
        <end position="131"/>
    </location>
</feature>
<feature type="region of interest" description="Actin-binding, Ca-sensitive" evidence="2">
    <location>
        <begin position="451"/>
        <end position="792"/>
    </location>
</feature>
<feature type="binding site" evidence="1">
    <location>
        <begin position="167"/>
        <end position="174"/>
    </location>
    <ligand>
        <name>a 1,2-diacyl-sn-glycero-3-phospho-(1D-myo-inositol-4,5-bisphosphate)</name>
        <dbReference type="ChEBI" id="CHEBI:58456"/>
    </ligand>
</feature>
<feature type="binding site" evidence="1">
    <location>
        <begin position="193"/>
        <end position="201"/>
    </location>
    <ligand>
        <name>a 1,2-diacyl-sn-glycero-3-phospho-(1D-myo-inositol-4,5-bisphosphate)</name>
        <dbReference type="ChEBI" id="CHEBI:58456"/>
    </ligand>
</feature>
<feature type="binding site" evidence="1">
    <location>
        <position position="599"/>
    </location>
    <ligand>
        <name>Ca(2+)</name>
        <dbReference type="ChEBI" id="CHEBI:29108"/>
        <label>1</label>
    </ligand>
</feature>
<feature type="binding site" evidence="1">
    <location>
        <position position="623"/>
    </location>
    <ligand>
        <name>Ca(2+)</name>
        <dbReference type="ChEBI" id="CHEBI:29108"/>
        <label>1</label>
    </ligand>
</feature>
<feature type="binding site" evidence="1">
    <location>
        <position position="705"/>
    </location>
    <ligand>
        <name>Ca(2+)</name>
        <dbReference type="ChEBI" id="CHEBI:29108"/>
        <label>2</label>
    </ligand>
</feature>
<feature type="binding site" evidence="1">
    <location>
        <position position="706"/>
    </location>
    <ligand>
        <name>Ca(2+)</name>
        <dbReference type="ChEBI" id="CHEBI:29108"/>
        <label>2</label>
    </ligand>
</feature>
<feature type="binding site" evidence="1">
    <location>
        <position position="728"/>
    </location>
    <ligand>
        <name>Ca(2+)</name>
        <dbReference type="ChEBI" id="CHEBI:29108"/>
        <label>2</label>
    </ligand>
</feature>
<feature type="modified residue" description="Phosphotyrosine; by SRC" evidence="5">
    <location>
        <position position="90"/>
    </location>
</feature>
<feature type="modified residue" description="Phosphotyrosine; by SRC" evidence="5">
    <location>
        <position position="612"/>
    </location>
</feature>
<feature type="modified residue" description="Phosphotyrosine; by SRC" evidence="5">
    <location>
        <position position="662"/>
    </location>
</feature>
<feature type="splice variant" id="VSP_007010" description="In isoform 2." evidence="4">
    <location>
        <begin position="1"/>
        <end position="58"/>
    </location>
</feature>
<feature type="splice variant" id="VSP_058364" description="In isoform K.">
    <original>MDASGAATMAVLSS</original>
    <variation>MF</variation>
    <location>
        <begin position="1"/>
        <end position="14"/>
    </location>
</feature>
<feature type="sequence conflict" description="In Ref. 2; CAA53294/CAA53295." evidence="5" ref="2">
    <original>N</original>
    <variation>S</variation>
    <location>
        <position position="498"/>
    </location>
</feature>
<feature type="sequence conflict" description="In Ref. 2; CAA53294/CAA53295." evidence="5" ref="2">
    <original>G</original>
    <variation>S</variation>
    <location>
        <position position="646"/>
    </location>
</feature>
<name>GELS_DROME</name>
<reference evidence="5" key="1">
    <citation type="journal article" date="1993" name="J. Mol. Biol.">
        <title>Cloning of a secretory gelsolin from Drosophila melanogaster.</title>
        <authorList>
            <person name="Heintzelman M.B."/>
            <person name="Frankel S.A."/>
            <person name="Artavanis-Tsakonas S."/>
            <person name="Mooseker M.S."/>
        </authorList>
    </citation>
    <scope>NUCLEOTIDE SEQUENCE [MRNA] (ISOFORM 1)</scope>
</reference>
<reference evidence="5" key="2">
    <citation type="journal article" date="1994" name="J. Cell Biol.">
        <title>Identification of secreted and cytosolic gelsolin in Drosophila.</title>
        <authorList>
            <person name="Stella M.C."/>
            <person name="Schauerte H."/>
            <person name="Straub K.L."/>
            <person name="Leptin M."/>
        </authorList>
    </citation>
    <scope>NUCLEOTIDE SEQUENCE [MRNA] (ISOFORMS 1 AND 2)</scope>
    <scope>FUNCTION</scope>
    <scope>SUBUNIT</scope>
    <scope>SUBCELLULAR LOCATION</scope>
    <scope>TISSUE SPECIFICITY</scope>
</reference>
<reference key="3">
    <citation type="journal article" date="2000" name="Science">
        <title>The genome sequence of Drosophila melanogaster.</title>
        <authorList>
            <person name="Adams M.D."/>
            <person name="Celniker S.E."/>
            <person name="Holt R.A."/>
            <person name="Evans C.A."/>
            <person name="Gocayne J.D."/>
            <person name="Amanatides P.G."/>
            <person name="Scherer S.E."/>
            <person name="Li P.W."/>
            <person name="Hoskins R.A."/>
            <person name="Galle R.F."/>
            <person name="George R.A."/>
            <person name="Lewis S.E."/>
            <person name="Richards S."/>
            <person name="Ashburner M."/>
            <person name="Henderson S.N."/>
            <person name="Sutton G.G."/>
            <person name="Wortman J.R."/>
            <person name="Yandell M.D."/>
            <person name="Zhang Q."/>
            <person name="Chen L.X."/>
            <person name="Brandon R.C."/>
            <person name="Rogers Y.-H.C."/>
            <person name="Blazej R.G."/>
            <person name="Champe M."/>
            <person name="Pfeiffer B.D."/>
            <person name="Wan K.H."/>
            <person name="Doyle C."/>
            <person name="Baxter E.G."/>
            <person name="Helt G."/>
            <person name="Nelson C.R."/>
            <person name="Miklos G.L.G."/>
            <person name="Abril J.F."/>
            <person name="Agbayani A."/>
            <person name="An H.-J."/>
            <person name="Andrews-Pfannkoch C."/>
            <person name="Baldwin D."/>
            <person name="Ballew R.M."/>
            <person name="Basu A."/>
            <person name="Baxendale J."/>
            <person name="Bayraktaroglu L."/>
            <person name="Beasley E.M."/>
            <person name="Beeson K.Y."/>
            <person name="Benos P.V."/>
            <person name="Berman B.P."/>
            <person name="Bhandari D."/>
            <person name="Bolshakov S."/>
            <person name="Borkova D."/>
            <person name="Botchan M.R."/>
            <person name="Bouck J."/>
            <person name="Brokstein P."/>
            <person name="Brottier P."/>
            <person name="Burtis K.C."/>
            <person name="Busam D.A."/>
            <person name="Butler H."/>
            <person name="Cadieu E."/>
            <person name="Center A."/>
            <person name="Chandra I."/>
            <person name="Cherry J.M."/>
            <person name="Cawley S."/>
            <person name="Dahlke C."/>
            <person name="Davenport L.B."/>
            <person name="Davies P."/>
            <person name="de Pablos B."/>
            <person name="Delcher A."/>
            <person name="Deng Z."/>
            <person name="Mays A.D."/>
            <person name="Dew I."/>
            <person name="Dietz S.M."/>
            <person name="Dodson K."/>
            <person name="Doup L.E."/>
            <person name="Downes M."/>
            <person name="Dugan-Rocha S."/>
            <person name="Dunkov B.C."/>
            <person name="Dunn P."/>
            <person name="Durbin K.J."/>
            <person name="Evangelista C.C."/>
            <person name="Ferraz C."/>
            <person name="Ferriera S."/>
            <person name="Fleischmann W."/>
            <person name="Fosler C."/>
            <person name="Gabrielian A.E."/>
            <person name="Garg N.S."/>
            <person name="Gelbart W.M."/>
            <person name="Glasser K."/>
            <person name="Glodek A."/>
            <person name="Gong F."/>
            <person name="Gorrell J.H."/>
            <person name="Gu Z."/>
            <person name="Guan P."/>
            <person name="Harris M."/>
            <person name="Harris N.L."/>
            <person name="Harvey D.A."/>
            <person name="Heiman T.J."/>
            <person name="Hernandez J.R."/>
            <person name="Houck J."/>
            <person name="Hostin D."/>
            <person name="Houston K.A."/>
            <person name="Howland T.J."/>
            <person name="Wei M.-H."/>
            <person name="Ibegwam C."/>
            <person name="Jalali M."/>
            <person name="Kalush F."/>
            <person name="Karpen G.H."/>
            <person name="Ke Z."/>
            <person name="Kennison J.A."/>
            <person name="Ketchum K.A."/>
            <person name="Kimmel B.E."/>
            <person name="Kodira C.D."/>
            <person name="Kraft C.L."/>
            <person name="Kravitz S."/>
            <person name="Kulp D."/>
            <person name="Lai Z."/>
            <person name="Lasko P."/>
            <person name="Lei Y."/>
            <person name="Levitsky A.A."/>
            <person name="Li J.H."/>
            <person name="Li Z."/>
            <person name="Liang Y."/>
            <person name="Lin X."/>
            <person name="Liu X."/>
            <person name="Mattei B."/>
            <person name="McIntosh T.C."/>
            <person name="McLeod M.P."/>
            <person name="McPherson D."/>
            <person name="Merkulov G."/>
            <person name="Milshina N.V."/>
            <person name="Mobarry C."/>
            <person name="Morris J."/>
            <person name="Moshrefi A."/>
            <person name="Mount S.M."/>
            <person name="Moy M."/>
            <person name="Murphy B."/>
            <person name="Murphy L."/>
            <person name="Muzny D.M."/>
            <person name="Nelson D.L."/>
            <person name="Nelson D.R."/>
            <person name="Nelson K.A."/>
            <person name="Nixon K."/>
            <person name="Nusskern D.R."/>
            <person name="Pacleb J.M."/>
            <person name="Palazzolo M."/>
            <person name="Pittman G.S."/>
            <person name="Pan S."/>
            <person name="Pollard J."/>
            <person name="Puri V."/>
            <person name="Reese M.G."/>
            <person name="Reinert K."/>
            <person name="Remington K."/>
            <person name="Saunders R.D.C."/>
            <person name="Scheeler F."/>
            <person name="Shen H."/>
            <person name="Shue B.C."/>
            <person name="Siden-Kiamos I."/>
            <person name="Simpson M."/>
            <person name="Skupski M.P."/>
            <person name="Smith T.J."/>
            <person name="Spier E."/>
            <person name="Spradling A.C."/>
            <person name="Stapleton M."/>
            <person name="Strong R."/>
            <person name="Sun E."/>
            <person name="Svirskas R."/>
            <person name="Tector C."/>
            <person name="Turner R."/>
            <person name="Venter E."/>
            <person name="Wang A.H."/>
            <person name="Wang X."/>
            <person name="Wang Z.-Y."/>
            <person name="Wassarman D.A."/>
            <person name="Weinstock G.M."/>
            <person name="Weissenbach J."/>
            <person name="Williams S.M."/>
            <person name="Woodage T."/>
            <person name="Worley K.C."/>
            <person name="Wu D."/>
            <person name="Yang S."/>
            <person name="Yao Q.A."/>
            <person name="Ye J."/>
            <person name="Yeh R.-F."/>
            <person name="Zaveri J.S."/>
            <person name="Zhan M."/>
            <person name="Zhang G."/>
            <person name="Zhao Q."/>
            <person name="Zheng L."/>
            <person name="Zheng X.H."/>
            <person name="Zhong F.N."/>
            <person name="Zhong W."/>
            <person name="Zhou X."/>
            <person name="Zhu S.C."/>
            <person name="Zhu X."/>
            <person name="Smith H.O."/>
            <person name="Gibbs R.A."/>
            <person name="Myers E.W."/>
            <person name="Rubin G.M."/>
            <person name="Venter J.C."/>
        </authorList>
    </citation>
    <scope>NUCLEOTIDE SEQUENCE [LARGE SCALE GENOMIC DNA]</scope>
    <source>
        <strain>Berkeley</strain>
    </source>
</reference>
<reference key="4">
    <citation type="journal article" date="2002" name="Genome Biol.">
        <title>Annotation of the Drosophila melanogaster euchromatic genome: a systematic review.</title>
        <authorList>
            <person name="Misra S."/>
            <person name="Crosby M.A."/>
            <person name="Mungall C.J."/>
            <person name="Matthews B.B."/>
            <person name="Campbell K.S."/>
            <person name="Hradecky P."/>
            <person name="Huang Y."/>
            <person name="Kaminker J.S."/>
            <person name="Millburn G.H."/>
            <person name="Prochnik S.E."/>
            <person name="Smith C.D."/>
            <person name="Tupy J.L."/>
            <person name="Whitfield E.J."/>
            <person name="Bayraktaroglu L."/>
            <person name="Berman B.P."/>
            <person name="Bettencourt B.R."/>
            <person name="Celniker S.E."/>
            <person name="de Grey A.D.N.J."/>
            <person name="Drysdale R.A."/>
            <person name="Harris N.L."/>
            <person name="Richter J."/>
            <person name="Russo S."/>
            <person name="Schroeder A.J."/>
            <person name="Shu S.Q."/>
            <person name="Stapleton M."/>
            <person name="Yamada C."/>
            <person name="Ashburner M."/>
            <person name="Gelbart W.M."/>
            <person name="Rubin G.M."/>
            <person name="Lewis S.E."/>
        </authorList>
    </citation>
    <scope>GENOME REANNOTATION</scope>
    <scope>ALTERNATIVE SPLICING</scope>
    <source>
        <strain>Berkeley</strain>
    </source>
</reference>
<reference key="5">
    <citation type="journal article" date="2002" name="Genome Biol.">
        <title>A Drosophila full-length cDNA resource.</title>
        <authorList>
            <person name="Stapleton M."/>
            <person name="Carlson J.W."/>
            <person name="Brokstein P."/>
            <person name="Yu C."/>
            <person name="Champe M."/>
            <person name="George R.A."/>
            <person name="Guarin H."/>
            <person name="Kronmiller B."/>
            <person name="Pacleb J.M."/>
            <person name="Park S."/>
            <person name="Wan K.H."/>
            <person name="Rubin G.M."/>
            <person name="Celniker S.E."/>
        </authorList>
    </citation>
    <scope>NUCLEOTIDE SEQUENCE [LARGE SCALE MRNA] (ISOFORM 1)</scope>
    <source>
        <strain>Berkeley</strain>
        <tissue>Embryo</tissue>
    </source>
</reference>
<reference key="6">
    <citation type="submission" date="2007-12" db="EMBL/GenBank/DDBJ databases">
        <authorList>
            <person name="Stapleton M."/>
            <person name="Carlson J.W."/>
            <person name="Frise E."/>
            <person name="Kapadia B."/>
            <person name="Park S."/>
            <person name="Wan K.H."/>
            <person name="Yu C."/>
            <person name="Celniker S.E."/>
        </authorList>
    </citation>
    <scope>NUCLEOTIDE SEQUENCE [LARGE SCALE MRNA] (ISOFORM 1)</scope>
    <source>
        <strain>Berkeley</strain>
        <tissue>Embryo</tissue>
    </source>
</reference>
<proteinExistence type="evidence at protein level"/>
<comment type="function">
    <text evidence="3">Calcium-regulated, actin-modulating protein that binds to the plus (or barbed) ends of actin monomers or filaments, preventing monomer exchange (end-blocking or capping). It can promote the assembly of monomers into filaments (nucleation) as well as sever filaments already formed.</text>
</comment>
<comment type="subunit">
    <text evidence="3">Binds to actin and to fibronectin.</text>
</comment>
<comment type="subcellular location">
    <molecule>Isoform 2</molecule>
    <subcellularLocation>
        <location>Cytoplasm</location>
        <location>Cytoskeleton</location>
    </subcellularLocation>
</comment>
<comment type="subcellular location">
    <molecule>Isoform 1</molecule>
    <subcellularLocation>
        <location>Secreted</location>
    </subcellularLocation>
</comment>
<comment type="alternative products">
    <event type="alternative splicing"/>
    <isoform>
        <id>Q07171-1</id>
        <name evidence="3 5">1</name>
        <name evidence="3 5">B</name>
        <name evidence="7">D</name>
        <name evidence="7">F</name>
        <name evidence="3 5">Secreted</name>
        <sequence type="displayed"/>
    </isoform>
    <isoform>
        <id>Q07171-2</id>
        <name evidence="3 5">2</name>
        <name evidence="3 5">A</name>
        <name evidence="3 5">Cytoplasmic</name>
        <sequence type="described" ref="VSP_007010"/>
    </isoform>
    <isoform>
        <id>Q07171-6</id>
        <name evidence="7">K</name>
        <sequence type="described" ref="VSP_058364"/>
    </isoform>
</comment>
<comment type="tissue specificity">
    <text evidence="3">Isoform 1 and isoform 2 are ubiquitously expressed in early embryo. Isoform 1 is expressed in the fat body, and is abundant in hemolymph. Isoform 2 is expressed in parts of the gut.</text>
</comment>
<comment type="similarity">
    <text evidence="5">Belongs to the villin/gelsolin family.</text>
</comment>
<comment type="caution">
    <text evidence="5">Lacks one of the cysteines to make the disulfide bridge in isoform 1. It is replaced by Val-233.</text>
</comment>
<comment type="sequence caution" evidence="5">
    <conflict type="erroneous initiation">
        <sequence resource="EMBL-CDS" id="AAA28568"/>
    </conflict>
    <text>Truncated N-terminus.</text>
</comment>
<comment type="sequence caution" evidence="5">
    <conflict type="erroneous initiation">
        <sequence resource="EMBL-CDS" id="AAM50316"/>
    </conflict>
    <text>Truncated N-terminus.</text>
</comment>
<comment type="sequence caution" evidence="5">
    <conflict type="frameshift">
        <sequence resource="EMBL-CDS" id="AAM50316"/>
    </conflict>
</comment>
<comment type="sequence caution" evidence="5">
    <conflict type="miscellaneous discrepancy">
        <sequence resource="EMBL-CDS" id="AAM50316"/>
    </conflict>
    <text>Intron retention.</text>
</comment>
<comment type="sequence caution" evidence="5">
    <conflict type="erroneous initiation">
        <sequence resource="EMBL-CDS" id="ABY20529"/>
    </conflict>
    <text>Extended N-terminus.</text>
</comment>
<comment type="sequence caution" evidence="5">
    <conflict type="erroneous initiation">
        <sequence resource="EMBL-CDS" id="CAA53295"/>
    </conflict>
    <text>Truncated N-terminus.</text>
</comment>
<organism evidence="6">
    <name type="scientific">Drosophila melanogaster</name>
    <name type="common">Fruit fly</name>
    <dbReference type="NCBI Taxonomy" id="7227"/>
    <lineage>
        <taxon>Eukaryota</taxon>
        <taxon>Metazoa</taxon>
        <taxon>Ecdysozoa</taxon>
        <taxon>Arthropoda</taxon>
        <taxon>Hexapoda</taxon>
        <taxon>Insecta</taxon>
        <taxon>Pterygota</taxon>
        <taxon>Neoptera</taxon>
        <taxon>Endopterygota</taxon>
        <taxon>Diptera</taxon>
        <taxon>Brachycera</taxon>
        <taxon>Muscomorpha</taxon>
        <taxon>Ephydroidea</taxon>
        <taxon>Drosophilidae</taxon>
        <taxon>Drosophila</taxon>
        <taxon>Sophophora</taxon>
    </lineage>
</organism>
<evidence type="ECO:0000250" key="1"/>
<evidence type="ECO:0000255" key="2"/>
<evidence type="ECO:0000269" key="3">
    <source>
    </source>
</evidence>
<evidence type="ECO:0000303" key="4">
    <source>
    </source>
</evidence>
<evidence type="ECO:0000305" key="5"/>
<evidence type="ECO:0000312" key="6">
    <source>
        <dbReference type="EMBL" id="AAF52163.1"/>
    </source>
</evidence>
<evidence type="ECO:0000312" key="7">
    <source>
        <dbReference type="FlyBase" id="FBgn0010225"/>
    </source>
</evidence>
<keyword id="KW-0009">Actin-binding</keyword>
<keyword id="KW-0025">Alternative splicing</keyword>
<keyword id="KW-0106">Calcium</keyword>
<keyword id="KW-0963">Cytoplasm</keyword>
<keyword id="KW-0206">Cytoskeleton</keyword>
<keyword id="KW-0479">Metal-binding</keyword>
<keyword id="KW-0597">Phosphoprotein</keyword>
<keyword id="KW-1185">Reference proteome</keyword>
<keyword id="KW-0677">Repeat</keyword>
<keyword id="KW-0964">Secreted</keyword>
<keyword id="KW-0732">Signal</keyword>